<gene>
    <name evidence="8" type="primary">darB</name>
</gene>
<organism>
    <name type="scientific">Escherichia phage P1</name>
    <name type="common">Bacteriophage P1</name>
    <dbReference type="NCBI Taxonomy" id="2886926"/>
    <lineage>
        <taxon>Viruses</taxon>
        <taxon>Duplodnaviria</taxon>
        <taxon>Heunggongvirae</taxon>
        <taxon>Uroviricota</taxon>
        <taxon>Caudoviricetes</taxon>
        <taxon>Punavirus</taxon>
        <taxon>Punavirus P1</taxon>
    </lineage>
</organism>
<comment type="function">
    <text evidence="4 5">Capsid internal protein that is probably ejected along with the viral DNA and prevents degradation of viral DNA by the host EcoB and EcoK restriction-modification antiviral defense systems.</text>
</comment>
<comment type="subcellular location">
    <subcellularLocation>
        <location evidence="4 5">Virion</location>
    </subcellularLocation>
    <text evidence="4">Internal capsid protein. DarA is required for DarB incorporation into the virions.</text>
</comment>
<comment type="miscellaneous">
    <text evidence="4">Phage P1 Dar antirestriction system is composed of Hdf, DarA, DdrA, DdrB, DarB and Ulx. Hdf and DarA are incorporated first in the procapsid in a co-dependent manner, followed by DarB, DdrB and Ulx.</text>
</comment>
<comment type="similarity">
    <text evidence="7">Belongs to the helicase family.</text>
</comment>
<evidence type="ECO:0000255" key="1"/>
<evidence type="ECO:0000255" key="2">
    <source>
        <dbReference type="PROSITE-ProRule" id="PRU00541"/>
    </source>
</evidence>
<evidence type="ECO:0000255" key="3">
    <source>
        <dbReference type="PROSITE-ProRule" id="PRU00542"/>
    </source>
</evidence>
<evidence type="ECO:0000269" key="4">
    <source>
    </source>
</evidence>
<evidence type="ECO:0000269" key="5">
    <source>
    </source>
</evidence>
<evidence type="ECO:0000303" key="6">
    <source>
    </source>
</evidence>
<evidence type="ECO:0000305" key="7"/>
<evidence type="ECO:0000312" key="8">
    <source>
        <dbReference type="EMBL" id="AAQ14093.1"/>
    </source>
</evidence>
<sequence length="2255" mass="251543">MNKLSMGVFRCSSVSEILKYIRAITSHRAPIKYGVEKVEGKSYDRLRREANQKAIDLLNSLVDGATLTDEQRQILAGYTGEGGIGGSVSEYYTPKPIAEGVWEIMKLYGADVGNTLEPSAGTGVFNETKPVGTVMTATEISSVSGRINQLLHPEDSVQISPFEQLAVSTPNDSFDHVVGNVPFGGRDNTRNIDKPYAEETDMGSYFMLRMLDKIKPGGFMCVIVPPSIVSGSNMKRLRLRLSRKAEFLGAHRLPTGTFDANGTSTVVDVVLMRKHPAEMAEKIPLVHESTLESANVLWPTFISGKWFEKDGRRFVHGTQEKGFQGRIEVRADGQIDNQALKAKLIHCFESRIDWYLLDMAEPSPTADVVDEGEMRLINGVWQKYAGGRWIESDAGKELKIDVASYGADSWEALQRNLTTTEGRLGMTFTQMANVRDKYTTSISDDMVQLVDWINSQPEKYRERLYRGAMIGRMLIEYQDMKAAGHSAEQIEQQRLSLVSRLQAEIDRFGNPGRGPIAKLSGSGARAWFAFRGAIKLDGTISDELTGKLVTHDSSASYDSTSYQDTLRYLYSDLTRDPIQLDDFRLAFTGELPASDDELLNLLASTPGIAVSPYGGIVPFARATSGDINEIVAPKQEFLATLTDGPVKNNVLNQLAAIEEKRIKTPAENIRFKLNSRWFDRSVILEFLQENGYPDLRYVQSVQLEGDEMVSDTYHGGDGLFVGHRYGVVQRKDKETGEIRYEWDRKSGENATGFPAQLEKYLNGARIGGKDSATANGYREQMALLEDQFNKWIKTHDRYDELVAKYNDVFNSNIPYEHSGDPLGLKGLSGKRQPFDYQNSEVRRLSEDGRGILGFGTGLGKTTTALALEAFNYENGRSTRTAYVVPKSVLENWYYEAKEFLSEEAFSNYLFVGLDVLMDGDQIRQVPVLDENGKPVLGTDGTPVMRDALKLADEATITARMNAIPHSNYRAVVFTKEQYARIPLRDDTVDEHAQDMLYDFVAAGRVASAMDSDSHRKEAARRRVLSEYSDTGTEKAEKYPYFEDMGFDSVIADEGHNYRNSYKNGREASQLAYLPTSAVAQSARDMAIKNAYLMKKNGGRGPVLLTATPVVNTPIDAYNMLSHVLPKEYWQKMGIYGPDDFVKFFGKTRLETVQKISGEVEEKMALVGFENLDALRGIFHRWTTLKTAEDVKDTVEIPELDEHQQDAPLTEEQLAAYEELRQQAEAAAKANNGVTTSVNEDGVIEHEKARPIFSIIRDMDRVCTDMDLYYRRITYRFLPEYADAVQQLADSLPKQATSEDDDSDDSITQQSQYSLIDKGEFIQLQVPEAFEQEVNKRLARFGIDEQTVTHPVTPKYAKLIATLKEFFPEGKQIIFTDEKTQHQKLKRIICNALNLEPSKVGILNAQTVAEAGKTGKKLKAVKPPKELPDEPTDAQIAKYNEQMALYDAYIAQQNEMSLGGLEKIAADFQEGRTPIIICNKKAEVGINLHRGTTDIHHLTLPWTPASIAQRNGRGARVGSNRASVRVHYYCGKGSFDEYRLKTLKRKAGWISDILRSDKSEMENADANDMIEMQMYTAKDDGERLAMMQVQMDKAKAAQRARQKEQATIDLQNYIKAQHAAGEDVEVLTAELERSKAELEKTTAEVAKFKQAVMAKAADNADWKARWGSVHHTDRMLLAQYRASLKSAIQRKANISQAISPYEKLLNRTQKAATDIKRLRPLVEDAINKGILDVDPDLVNHASEFLVIGDRSWRVGQYYDCAGDIVRIKSLDFDSQRADVEIIFTFKGTKSGNWDVKTLDKQVDVTPDEDAVMQKISGGVSIAGINDIISCDDFYRFQQRGMIKITDSYGVQTTESGYSIDFVGTYTDPLKHAVYPDRRDGALKSSIAKWVLGMMSEGNNRQVRLAEVFLTELFGSNYGDVIASYGDTLSPEAIQEKIADAIARMPEKTSQGATRNGDSELEVTNAIFGTHEFRASDYEITTAQFGTIGIYSNKAEIKQAMDAASARIAAEREANLNHAVAALTQSWVTAIREAATTGKITPAIADVVNDGSKFMDAYKMDAVQLPSAYGQLSYRMTYNLVSMFSDLAILGLVDLNEVTPELLSMRKNHVEILQRINTVLAGRTDEEKQADADRINLALGNITEEEIAARNEKQEELSSIQGDATSIAQSLGLNYRVSTADLKMMYAPKFAAGEVFGLQEASGMKGVLFRAKDAIKTKFGARWLPAKAKNSDFPGNWWIIETKHNVADVLAVIQQYA</sequence>
<proteinExistence type="inferred from homology"/>
<keyword id="KW-0067">ATP-binding</keyword>
<keyword id="KW-0175">Coiled coil</keyword>
<keyword id="KW-0347">Helicase</keyword>
<keyword id="KW-0945">Host-virus interaction</keyword>
<keyword id="KW-0378">Hydrolase</keyword>
<keyword id="KW-1090">Inhibition of host innate immune response by virus</keyword>
<keyword id="KW-0547">Nucleotide-binding</keyword>
<keyword id="KW-1185">Reference proteome</keyword>
<keyword id="KW-1258">Restriction-modification system evasion by virus</keyword>
<keyword id="KW-0899">Viral immunoevasion</keyword>
<keyword id="KW-0946">Virion</keyword>
<protein>
    <recommendedName>
        <fullName evidence="6">Defense against restriction protein B</fullName>
        <ecNumber evidence="7">3.6.4.-</ecNumber>
    </recommendedName>
    <alternativeName>
        <fullName evidence="8">DarB</fullName>
    </alternativeName>
</protein>
<reference key="1">
    <citation type="journal article" date="2004" name="J. Bacteriol.">
        <title>Genome of bacteriophage P1.</title>
        <authorList>
            <person name="Lobocka M.B."/>
            <person name="Rose D.J."/>
            <person name="Plunkett G. III"/>
            <person name="Rusin M."/>
            <person name="Samojedny A."/>
            <person name="Lehnherr H."/>
            <person name="Yarmolinsky M.B."/>
            <person name="Blattner F.R."/>
        </authorList>
    </citation>
    <scope>NUCLEOTIDE SEQUENCE [GENOMIC DNA]</scope>
    <source>
        <strain evidence="8">Mod1902::IS5 c1.100 rev dmt</strain>
        <strain>Mod749::IS5 c1.100 mutant</strain>
    </source>
</reference>
<reference key="2">
    <citation type="journal article" date="1987" name="Virology">
        <title>Two DNA antirestriction systems of bacteriophage P1, darA, and darB: characterization of darA- phages.</title>
        <authorList>
            <person name="Iida S."/>
            <person name="Streiff M.B."/>
            <person name="Bickle T.A."/>
            <person name="Arber W."/>
        </authorList>
    </citation>
    <scope>FUNCTION</scope>
    <scope>SUBCELLULAR LOCATION</scope>
</reference>
<reference key="3">
    <citation type="journal article" date="2017" name="Mol. Microbiol.">
        <title>The multicomponent antirestriction system of phage P1 is linked to capsid morphogenesis.</title>
        <authorList>
            <person name="Piya D."/>
            <person name="Vara L."/>
            <person name="Russell W.K."/>
            <person name="Young R."/>
            <person name="Gill J.J."/>
        </authorList>
    </citation>
    <scope>FUNCTION</scope>
    <scope>SUBCELLULAR LOCATION</scope>
</reference>
<accession>Q71TF8</accession>
<feature type="chain" id="PRO_0000433213" description="Defense against restriction protein B">
    <location>
        <begin position="1"/>
        <end position="2255"/>
    </location>
</feature>
<feature type="domain" description="Helicase ATP-binding" evidence="2">
    <location>
        <begin position="841"/>
        <end position="1126"/>
    </location>
</feature>
<feature type="domain" description="Helicase C-terminal" evidence="3">
    <location>
        <begin position="1383"/>
        <end position="1568"/>
    </location>
</feature>
<feature type="coiled-coil region" evidence="1">
    <location>
        <begin position="1198"/>
        <end position="1234"/>
    </location>
</feature>
<feature type="coiled-coil region" evidence="1">
    <location>
        <begin position="1617"/>
        <end position="1654"/>
    </location>
</feature>
<feature type="short sequence motif" description="DEAH box" evidence="2">
    <location>
        <begin position="1052"/>
        <end position="1055"/>
    </location>
</feature>
<feature type="binding site" evidence="2">
    <location>
        <begin position="854"/>
        <end position="861"/>
    </location>
    <ligand>
        <name>ATP</name>
        <dbReference type="ChEBI" id="CHEBI:30616"/>
    </ligand>
</feature>
<dbReference type="EC" id="3.6.4.-" evidence="7"/>
<dbReference type="EMBL" id="AF234172">
    <property type="protein sequence ID" value="AAQ13985.1"/>
    <property type="molecule type" value="Genomic_DNA"/>
</dbReference>
<dbReference type="EMBL" id="AF234173">
    <property type="protein sequence ID" value="AAQ14093.1"/>
    <property type="molecule type" value="Genomic_DNA"/>
</dbReference>
<dbReference type="RefSeq" id="YP_006479.1">
    <property type="nucleotide sequence ID" value="NC_005856.1"/>
</dbReference>
<dbReference type="GeneID" id="2777481"/>
<dbReference type="KEGG" id="vg:2777481"/>
<dbReference type="Proteomes" id="UP000001577">
    <property type="component" value="Segment"/>
</dbReference>
<dbReference type="Proteomes" id="UP000008091">
    <property type="component" value="Genome"/>
</dbReference>
<dbReference type="GO" id="GO:0044423">
    <property type="term" value="C:virion component"/>
    <property type="evidence" value="ECO:0007669"/>
    <property type="project" value="UniProtKB-KW"/>
</dbReference>
<dbReference type="GO" id="GO:0005524">
    <property type="term" value="F:ATP binding"/>
    <property type="evidence" value="ECO:0007669"/>
    <property type="project" value="UniProtKB-KW"/>
</dbReference>
<dbReference type="GO" id="GO:0004386">
    <property type="term" value="F:helicase activity"/>
    <property type="evidence" value="ECO:0007669"/>
    <property type="project" value="UniProtKB-KW"/>
</dbReference>
<dbReference type="GO" id="GO:0016787">
    <property type="term" value="F:hydrolase activity"/>
    <property type="evidence" value="ECO:0007669"/>
    <property type="project" value="UniProtKB-KW"/>
</dbReference>
<dbReference type="GO" id="GO:0006304">
    <property type="term" value="P:DNA modification"/>
    <property type="evidence" value="ECO:0007669"/>
    <property type="project" value="InterPro"/>
</dbReference>
<dbReference type="GO" id="GO:0099018">
    <property type="term" value="P:symbiont-mediated evasion of host restriction-modification system"/>
    <property type="evidence" value="ECO:0000315"/>
    <property type="project" value="UniProtKB"/>
</dbReference>
<dbReference type="GO" id="GO:0052170">
    <property type="term" value="P:symbiont-mediated suppression of host innate immune response"/>
    <property type="evidence" value="ECO:0007669"/>
    <property type="project" value="UniProtKB-KW"/>
</dbReference>
<dbReference type="FunFam" id="3.40.50.10810:FF:000117">
    <property type="entry name" value="Defense against restriction protein B"/>
    <property type="match status" value="1"/>
</dbReference>
<dbReference type="FunFam" id="3.40.50.150:FF:000714">
    <property type="entry name" value="Defense against restriction protein B"/>
    <property type="match status" value="1"/>
</dbReference>
<dbReference type="Gene3D" id="3.40.50.300">
    <property type="entry name" value="P-loop containing nucleotide triphosphate hydrolases"/>
    <property type="match status" value="1"/>
</dbReference>
<dbReference type="Gene3D" id="3.40.50.10810">
    <property type="entry name" value="Tandem AAA-ATPase domain"/>
    <property type="match status" value="2"/>
</dbReference>
<dbReference type="Gene3D" id="3.40.50.150">
    <property type="entry name" value="Vaccinia Virus protein VP39"/>
    <property type="match status" value="1"/>
</dbReference>
<dbReference type="InterPro" id="IPR052933">
    <property type="entry name" value="DNA_Protect_Modify"/>
</dbReference>
<dbReference type="InterPro" id="IPR014001">
    <property type="entry name" value="Helicase_ATP-bd"/>
</dbReference>
<dbReference type="InterPro" id="IPR001650">
    <property type="entry name" value="Helicase_C-like"/>
</dbReference>
<dbReference type="InterPro" id="IPR011639">
    <property type="entry name" value="MethylTrfase_TaqI-like_dom"/>
</dbReference>
<dbReference type="InterPro" id="IPR027417">
    <property type="entry name" value="P-loop_NTPase"/>
</dbReference>
<dbReference type="InterPro" id="IPR029063">
    <property type="entry name" value="SAM-dependent_MTases_sf"/>
</dbReference>
<dbReference type="InterPro" id="IPR038718">
    <property type="entry name" value="SNF2-like_sf"/>
</dbReference>
<dbReference type="PANTHER" id="PTHR41313">
    <property type="entry name" value="ADENINE-SPECIFIC METHYLTRANSFERASE"/>
    <property type="match status" value="1"/>
</dbReference>
<dbReference type="PANTHER" id="PTHR41313:SF1">
    <property type="entry name" value="DNA METHYLASE ADENINE-SPECIFIC DOMAIN-CONTAINING PROTEIN"/>
    <property type="match status" value="1"/>
</dbReference>
<dbReference type="Pfam" id="PF07669">
    <property type="entry name" value="Eco57I"/>
    <property type="match status" value="1"/>
</dbReference>
<dbReference type="Pfam" id="PF00271">
    <property type="entry name" value="Helicase_C"/>
    <property type="match status" value="1"/>
</dbReference>
<dbReference type="PRINTS" id="PR00507">
    <property type="entry name" value="N12N6MTFRASE"/>
</dbReference>
<dbReference type="SMART" id="SM00487">
    <property type="entry name" value="DEXDc"/>
    <property type="match status" value="1"/>
</dbReference>
<dbReference type="SMART" id="SM00490">
    <property type="entry name" value="HELICc"/>
    <property type="match status" value="1"/>
</dbReference>
<dbReference type="SUPFAM" id="SSF52540">
    <property type="entry name" value="P-loop containing nucleoside triphosphate hydrolases"/>
    <property type="match status" value="2"/>
</dbReference>
<dbReference type="SUPFAM" id="SSF53335">
    <property type="entry name" value="S-adenosyl-L-methionine-dependent methyltransferases"/>
    <property type="match status" value="1"/>
</dbReference>
<dbReference type="PROSITE" id="PS51192">
    <property type="entry name" value="HELICASE_ATP_BIND_1"/>
    <property type="match status" value="1"/>
</dbReference>
<dbReference type="PROSITE" id="PS51194">
    <property type="entry name" value="HELICASE_CTER"/>
    <property type="match status" value="1"/>
</dbReference>
<name>DARB_BPP1</name>
<organismHost>
    <name type="scientific">Enterobacteriaceae</name>
    <dbReference type="NCBI Taxonomy" id="543"/>
</organismHost>